<name>FLPA_SYNY3</name>
<reference key="1">
    <citation type="journal article" date="1996" name="DNA Res.">
        <title>Sequence analysis of the genome of the unicellular cyanobacterium Synechocystis sp. strain PCC6803. II. Sequence determination of the entire genome and assignment of potential protein-coding regions.</title>
        <authorList>
            <person name="Kaneko T."/>
            <person name="Sato S."/>
            <person name="Kotani H."/>
            <person name="Tanaka A."/>
            <person name="Asamizu E."/>
            <person name="Nakamura Y."/>
            <person name="Miyajima N."/>
            <person name="Hirosawa M."/>
            <person name="Sugiura M."/>
            <person name="Sasamoto S."/>
            <person name="Kimura T."/>
            <person name="Hosouchi T."/>
            <person name="Matsuno A."/>
            <person name="Muraki A."/>
            <person name="Nakazaki N."/>
            <person name="Naruo K."/>
            <person name="Okumura S."/>
            <person name="Shimpo S."/>
            <person name="Takeuchi C."/>
            <person name="Wada T."/>
            <person name="Watanabe A."/>
            <person name="Yamada M."/>
            <person name="Yasuda M."/>
            <person name="Tabata S."/>
        </authorList>
    </citation>
    <scope>NUCLEOTIDE SEQUENCE [LARGE SCALE GENOMIC DNA]</scope>
    <source>
        <strain>ATCC 27184 / PCC 6803 / Kazusa</strain>
    </source>
</reference>
<reference key="2">
    <citation type="journal article" date="2020" name="Biochim. Biophys. Acta">
        <title>Regulation of light-induced H+ extrusion and uptake by cyanobacterial homologs of the plastidial FLAP1, DLDG1, and Ycf10 in Synechocystis sp. PCC6803.</title>
        <authorList>
            <person name="Inago H."/>
            <person name="Sato R."/>
            <person name="Masuda S."/>
        </authorList>
    </citation>
    <scope>FUNCTION</scope>
    <scope>DISRUPTION PHENOTYPE</scope>
    <source>
        <strain>ATCC 27184 / PCC 6803 / Kazusa</strain>
    </source>
</reference>
<comment type="function">
    <text evidence="4">Essential for photosynthetic growth under fluctuating light by modulating PxcA- and PxcL-dependent intracellular pH regulation via proton transport (e.g. transient pH reduction upon transition from dark to light followed by an increase in the light until light-to-dark shift).</text>
</comment>
<comment type="subcellular location">
    <subcellularLocation>
        <location evidence="1">Cellular thylakoid membrane</location>
        <topology evidence="2">Multi-pass membrane protein</topology>
    </subcellularLocation>
    <subcellularLocation>
        <location evidence="6">Cell inner membrane</location>
        <topology evidence="2">Multi-pass membrane protein</topology>
    </subcellularLocation>
</comment>
<comment type="disruption phenotype">
    <text evidence="4">Inhibited growth under dark-light cycles (PubMed:32619428). Altered PxcA- and PxcL-dependent H(+) efflux/influx activities under fluctuating light conditions; prolonged light-induced H(+) extrusion followed by slightly decreased H(+) influx activity until light-to-dark shift (PubMed:32619428). The double mutants missing both PxcA and FlpA or PxcL and FlpA have both reduced light-induced H(+) extrusion and later lower H(+) uptake activity (PubMed:32619428).</text>
</comment>
<comment type="similarity">
    <text evidence="6">Belongs to the FLAP family.</text>
</comment>
<sequence length="333" mass="34864">MLKMLKNLPLPKNITWRSVWMRGTSVVIIFVLAFTLVFTPTFEAEARRSGGRIGGGSFRAPSAPSRSYSGPSGGSYRSGGTYGGGGFGFPFIIPFFGFGGGFGGIFGILVMIAIANVVINAIRNGGGSSGEGGGGLAASSDPQVGIAQIQVGLLASAKELKKELDELALSADTGTANGRSLVLQEATLALLRHPEYWVYGSSQSDKVRLSAAEAAFNQLALTERSKFTDETLSNFNNQLRQGGRATAIGGDSPDAVPDGAGEYILVTIIAAALGNLNLPAVNDSSQLKQSLQTLGGISSDRLLAIEVLWTPQEEGDTLTSNDIISEYPELRLV</sequence>
<proteinExistence type="inferred from homology"/>
<dbReference type="EMBL" id="BA000022">
    <property type="protein sequence ID" value="BAA18534.1"/>
    <property type="molecule type" value="Genomic_DNA"/>
</dbReference>
<dbReference type="PIR" id="S76405">
    <property type="entry name" value="S76405"/>
</dbReference>
<dbReference type="IntAct" id="P74433">
    <property type="interactions" value="4"/>
</dbReference>
<dbReference type="STRING" id="1148.gene:10499416"/>
<dbReference type="PaxDb" id="1148-1653622"/>
<dbReference type="EnsemblBacteria" id="BAA18534">
    <property type="protein sequence ID" value="BAA18534"/>
    <property type="gene ID" value="BAA18534"/>
</dbReference>
<dbReference type="KEGG" id="syn:slr0404"/>
<dbReference type="eggNOG" id="COG4371">
    <property type="taxonomic scope" value="Bacteria"/>
</dbReference>
<dbReference type="InParanoid" id="P74433"/>
<dbReference type="Proteomes" id="UP000001425">
    <property type="component" value="Chromosome"/>
</dbReference>
<dbReference type="GO" id="GO:0031676">
    <property type="term" value="C:plasma membrane-derived thylakoid membrane"/>
    <property type="evidence" value="ECO:0007669"/>
    <property type="project" value="UniProtKB-SubCell"/>
</dbReference>
<dbReference type="InterPro" id="IPR010903">
    <property type="entry name" value="DUF1517"/>
</dbReference>
<dbReference type="InterPro" id="IPR053023">
    <property type="entry name" value="FLAP_modulator"/>
</dbReference>
<dbReference type="PANTHER" id="PTHR33975">
    <property type="entry name" value="MYELIN-ASSOCIATED OLIGODENDROCYTE BASIC PROTEIN"/>
    <property type="match status" value="1"/>
</dbReference>
<dbReference type="PANTHER" id="PTHR33975:SF2">
    <property type="entry name" value="MYELIN-ASSOCIATED OLIGODENDROCYTE BASIC PROTEIN"/>
    <property type="match status" value="1"/>
</dbReference>
<dbReference type="Pfam" id="PF07466">
    <property type="entry name" value="DUF1517"/>
    <property type="match status" value="1"/>
</dbReference>
<dbReference type="PIRSF" id="PIRSF037221">
    <property type="entry name" value="DUF1517"/>
    <property type="match status" value="1"/>
</dbReference>
<organism>
    <name type="scientific">Synechocystis sp. (strain ATCC 27184 / PCC 6803 / Kazusa)</name>
    <dbReference type="NCBI Taxonomy" id="1111708"/>
    <lineage>
        <taxon>Bacteria</taxon>
        <taxon>Bacillati</taxon>
        <taxon>Cyanobacteriota</taxon>
        <taxon>Cyanophyceae</taxon>
        <taxon>Synechococcales</taxon>
        <taxon>Merismopediaceae</taxon>
        <taxon>Synechocystis</taxon>
    </lineage>
</organism>
<keyword id="KW-0997">Cell inner membrane</keyword>
<keyword id="KW-1003">Cell membrane</keyword>
<keyword id="KW-0472">Membrane</keyword>
<keyword id="KW-1185">Reference proteome</keyword>
<keyword id="KW-0793">Thylakoid</keyword>
<keyword id="KW-0812">Transmembrane</keyword>
<keyword id="KW-1133">Transmembrane helix</keyword>
<feature type="chain" id="PRO_0000459559" description="Protein FLAP1 homolog A">
    <location>
        <begin position="1"/>
        <end position="333"/>
    </location>
</feature>
<feature type="transmembrane region" description="Helical" evidence="2">
    <location>
        <begin position="26"/>
        <end position="46"/>
    </location>
</feature>
<feature type="transmembrane region" description="Helical" evidence="2">
    <location>
        <begin position="92"/>
        <end position="112"/>
    </location>
</feature>
<feature type="transmembrane region" description="Helical" evidence="2">
    <location>
        <begin position="261"/>
        <end position="281"/>
    </location>
</feature>
<feature type="region of interest" description="Disordered" evidence="3">
    <location>
        <begin position="53"/>
        <end position="74"/>
    </location>
</feature>
<feature type="compositionally biased region" description="Low complexity" evidence="3">
    <location>
        <begin position="58"/>
        <end position="70"/>
    </location>
</feature>
<evidence type="ECO:0000250" key="1">
    <source>
        <dbReference type="UniProtKB" id="Q8RWI0"/>
    </source>
</evidence>
<evidence type="ECO:0000255" key="2"/>
<evidence type="ECO:0000256" key="3">
    <source>
        <dbReference type="SAM" id="MobiDB-lite"/>
    </source>
</evidence>
<evidence type="ECO:0000269" key="4">
    <source>
    </source>
</evidence>
<evidence type="ECO:0000303" key="5">
    <source>
    </source>
</evidence>
<evidence type="ECO:0000305" key="6"/>
<accession>P74433</accession>
<gene>
    <name evidence="5" type="primary">flpA</name>
    <name evidence="5" type="ordered locus">slr0404</name>
</gene>
<protein>
    <recommendedName>
        <fullName evidence="5">Protein FLAP1 homolog A</fullName>
        <shortName evidence="5">FlpA</shortName>
    </recommendedName>
</protein>